<gene>
    <name evidence="1" type="primary">hslU</name>
    <name type="synonym">htpI</name>
    <name type="ordered locus">BPSL0203</name>
</gene>
<evidence type="ECO:0000255" key="1">
    <source>
        <dbReference type="HAMAP-Rule" id="MF_00249"/>
    </source>
</evidence>
<dbReference type="EMBL" id="BX571965">
    <property type="protein sequence ID" value="CAH34190.1"/>
    <property type="molecule type" value="Genomic_DNA"/>
</dbReference>
<dbReference type="RefSeq" id="WP_004523084.1">
    <property type="nucleotide sequence ID" value="NZ_CP009538.1"/>
</dbReference>
<dbReference type="RefSeq" id="YP_106831.1">
    <property type="nucleotide sequence ID" value="NC_006350.1"/>
</dbReference>
<dbReference type="SMR" id="Q63YI4"/>
<dbReference type="STRING" id="272560.BPSL0203"/>
<dbReference type="KEGG" id="bps:BPSL0203"/>
<dbReference type="PATRIC" id="fig|272560.51.peg.1514"/>
<dbReference type="eggNOG" id="COG1220">
    <property type="taxonomic scope" value="Bacteria"/>
</dbReference>
<dbReference type="Proteomes" id="UP000000605">
    <property type="component" value="Chromosome 1"/>
</dbReference>
<dbReference type="GO" id="GO:0009376">
    <property type="term" value="C:HslUV protease complex"/>
    <property type="evidence" value="ECO:0007669"/>
    <property type="project" value="UniProtKB-UniRule"/>
</dbReference>
<dbReference type="GO" id="GO:0005524">
    <property type="term" value="F:ATP binding"/>
    <property type="evidence" value="ECO:0007669"/>
    <property type="project" value="UniProtKB-UniRule"/>
</dbReference>
<dbReference type="GO" id="GO:0016887">
    <property type="term" value="F:ATP hydrolysis activity"/>
    <property type="evidence" value="ECO:0007669"/>
    <property type="project" value="InterPro"/>
</dbReference>
<dbReference type="GO" id="GO:0008233">
    <property type="term" value="F:peptidase activity"/>
    <property type="evidence" value="ECO:0007669"/>
    <property type="project" value="InterPro"/>
</dbReference>
<dbReference type="GO" id="GO:0036402">
    <property type="term" value="F:proteasome-activating activity"/>
    <property type="evidence" value="ECO:0007669"/>
    <property type="project" value="UniProtKB-UniRule"/>
</dbReference>
<dbReference type="GO" id="GO:0043335">
    <property type="term" value="P:protein unfolding"/>
    <property type="evidence" value="ECO:0007669"/>
    <property type="project" value="UniProtKB-UniRule"/>
</dbReference>
<dbReference type="GO" id="GO:0051603">
    <property type="term" value="P:proteolysis involved in protein catabolic process"/>
    <property type="evidence" value="ECO:0007669"/>
    <property type="project" value="TreeGrafter"/>
</dbReference>
<dbReference type="CDD" id="cd19498">
    <property type="entry name" value="RecA-like_HslU"/>
    <property type="match status" value="1"/>
</dbReference>
<dbReference type="FunFam" id="3.40.50.300:FF:000213">
    <property type="entry name" value="ATP-dependent protease ATPase subunit HslU"/>
    <property type="match status" value="1"/>
</dbReference>
<dbReference type="FunFam" id="3.40.50.300:FF:000220">
    <property type="entry name" value="ATP-dependent protease ATPase subunit HslU"/>
    <property type="match status" value="1"/>
</dbReference>
<dbReference type="Gene3D" id="1.10.8.60">
    <property type="match status" value="1"/>
</dbReference>
<dbReference type="Gene3D" id="3.40.50.300">
    <property type="entry name" value="P-loop containing nucleotide triphosphate hydrolases"/>
    <property type="match status" value="2"/>
</dbReference>
<dbReference type="HAMAP" id="MF_00249">
    <property type="entry name" value="HslU"/>
    <property type="match status" value="1"/>
</dbReference>
<dbReference type="InterPro" id="IPR003593">
    <property type="entry name" value="AAA+_ATPase"/>
</dbReference>
<dbReference type="InterPro" id="IPR050052">
    <property type="entry name" value="ATP-dep_Clp_protease_ClpX"/>
</dbReference>
<dbReference type="InterPro" id="IPR003959">
    <property type="entry name" value="ATPase_AAA_core"/>
</dbReference>
<dbReference type="InterPro" id="IPR019489">
    <property type="entry name" value="Clp_ATPase_C"/>
</dbReference>
<dbReference type="InterPro" id="IPR004491">
    <property type="entry name" value="HslU"/>
</dbReference>
<dbReference type="InterPro" id="IPR027417">
    <property type="entry name" value="P-loop_NTPase"/>
</dbReference>
<dbReference type="NCBIfam" id="TIGR00390">
    <property type="entry name" value="hslU"/>
    <property type="match status" value="1"/>
</dbReference>
<dbReference type="NCBIfam" id="NF003544">
    <property type="entry name" value="PRK05201.1"/>
    <property type="match status" value="1"/>
</dbReference>
<dbReference type="PANTHER" id="PTHR48102">
    <property type="entry name" value="ATP-DEPENDENT CLP PROTEASE ATP-BINDING SUBUNIT CLPX-LIKE, MITOCHONDRIAL-RELATED"/>
    <property type="match status" value="1"/>
</dbReference>
<dbReference type="PANTHER" id="PTHR48102:SF3">
    <property type="entry name" value="ATP-DEPENDENT PROTEASE ATPASE SUBUNIT HSLU"/>
    <property type="match status" value="1"/>
</dbReference>
<dbReference type="Pfam" id="PF00004">
    <property type="entry name" value="AAA"/>
    <property type="match status" value="1"/>
</dbReference>
<dbReference type="Pfam" id="PF07724">
    <property type="entry name" value="AAA_2"/>
    <property type="match status" value="1"/>
</dbReference>
<dbReference type="SMART" id="SM00382">
    <property type="entry name" value="AAA"/>
    <property type="match status" value="1"/>
</dbReference>
<dbReference type="SMART" id="SM01086">
    <property type="entry name" value="ClpB_D2-small"/>
    <property type="match status" value="1"/>
</dbReference>
<dbReference type="SUPFAM" id="SSF52540">
    <property type="entry name" value="P-loop containing nucleoside triphosphate hydrolases"/>
    <property type="match status" value="1"/>
</dbReference>
<organism>
    <name type="scientific">Burkholderia pseudomallei (strain K96243)</name>
    <dbReference type="NCBI Taxonomy" id="272560"/>
    <lineage>
        <taxon>Bacteria</taxon>
        <taxon>Pseudomonadati</taxon>
        <taxon>Pseudomonadota</taxon>
        <taxon>Betaproteobacteria</taxon>
        <taxon>Burkholderiales</taxon>
        <taxon>Burkholderiaceae</taxon>
        <taxon>Burkholderia</taxon>
        <taxon>pseudomallei group</taxon>
    </lineage>
</organism>
<sequence length="447" mass="49710">MSTMTPAEIVSELDKHIIGQAKAKKAVAVALRNRWRRQQVAEPLRQEITPKNILMIGPTGVGKTEIARRLAKLADAPFIKIEATKFTEVGYVGRDVDSIVRDLIEISVKQTRETEMRKVRSKATDLAEDRILDVLLPQPRAVGFGASAEHANDDNNATRQTFRKRLREGQLDDKEIELDIEQPAVGMDIMAPPGMEEMTEQIRSMFSNLGSGKKQRRKVKIKEALKLLTDEEAAKMLNDEEVKTKAVQNVEQNGIVFLDEIDKITSRNHEGGGGEVSRQGVQRDLLPLVEGTTINTKYGMVKTDHILFIASGAFHLAKPSDLIPELQGRFPIRVELDSLSVKDFEAILVATDASLVKQYQALLATEDVKLEFADDGIRRLAEIAYAVNEKTENIGARRLYTVIEKLLEEVSFAAGNHAGQSVTIDSAYVDHALGEVSKDEDLSRYVL</sequence>
<keyword id="KW-0067">ATP-binding</keyword>
<keyword id="KW-0143">Chaperone</keyword>
<keyword id="KW-0963">Cytoplasm</keyword>
<keyword id="KW-0547">Nucleotide-binding</keyword>
<keyword id="KW-1185">Reference proteome</keyword>
<accession>Q63YI4</accession>
<reference key="1">
    <citation type="journal article" date="2004" name="Proc. Natl. Acad. Sci. U.S.A.">
        <title>Genomic plasticity of the causative agent of melioidosis, Burkholderia pseudomallei.</title>
        <authorList>
            <person name="Holden M.T.G."/>
            <person name="Titball R.W."/>
            <person name="Peacock S.J."/>
            <person name="Cerdeno-Tarraga A.-M."/>
            <person name="Atkins T."/>
            <person name="Crossman L.C."/>
            <person name="Pitt T."/>
            <person name="Churcher C."/>
            <person name="Mungall K.L."/>
            <person name="Bentley S.D."/>
            <person name="Sebaihia M."/>
            <person name="Thomson N.R."/>
            <person name="Bason N."/>
            <person name="Beacham I.R."/>
            <person name="Brooks K."/>
            <person name="Brown K.A."/>
            <person name="Brown N.F."/>
            <person name="Challis G.L."/>
            <person name="Cherevach I."/>
            <person name="Chillingworth T."/>
            <person name="Cronin A."/>
            <person name="Crossett B."/>
            <person name="Davis P."/>
            <person name="DeShazer D."/>
            <person name="Feltwell T."/>
            <person name="Fraser A."/>
            <person name="Hance Z."/>
            <person name="Hauser H."/>
            <person name="Holroyd S."/>
            <person name="Jagels K."/>
            <person name="Keith K.E."/>
            <person name="Maddison M."/>
            <person name="Moule S."/>
            <person name="Price C."/>
            <person name="Quail M.A."/>
            <person name="Rabbinowitsch E."/>
            <person name="Rutherford K."/>
            <person name="Sanders M."/>
            <person name="Simmonds M."/>
            <person name="Songsivilai S."/>
            <person name="Stevens K."/>
            <person name="Tumapa S."/>
            <person name="Vesaratchavest M."/>
            <person name="Whitehead S."/>
            <person name="Yeats C."/>
            <person name="Barrell B.G."/>
            <person name="Oyston P.C.F."/>
            <person name="Parkhill J."/>
        </authorList>
    </citation>
    <scope>NUCLEOTIDE SEQUENCE [LARGE SCALE GENOMIC DNA]</scope>
    <source>
        <strain>K96243</strain>
    </source>
</reference>
<protein>
    <recommendedName>
        <fullName evidence="1">ATP-dependent protease ATPase subunit HslU</fullName>
    </recommendedName>
    <alternativeName>
        <fullName evidence="1">Unfoldase HslU</fullName>
    </alternativeName>
</protein>
<comment type="function">
    <text evidence="1">ATPase subunit of a proteasome-like degradation complex; this subunit has chaperone activity. The binding of ATP and its subsequent hydrolysis by HslU are essential for unfolding of protein substrates subsequently hydrolyzed by HslV. HslU recognizes the N-terminal part of its protein substrates and unfolds these before they are guided to HslV for hydrolysis.</text>
</comment>
<comment type="subunit">
    <text evidence="1">A double ring-shaped homohexamer of HslV is capped on each side by a ring-shaped HslU homohexamer. The assembly of the HslU/HslV complex is dependent on binding of ATP.</text>
</comment>
<comment type="subcellular location">
    <subcellularLocation>
        <location evidence="1">Cytoplasm</location>
    </subcellularLocation>
</comment>
<comment type="similarity">
    <text evidence="1">Belongs to the ClpX chaperone family. HslU subfamily.</text>
</comment>
<proteinExistence type="inferred from homology"/>
<name>HSLU_BURPS</name>
<feature type="chain" id="PRO_0000160491" description="ATP-dependent protease ATPase subunit HslU">
    <location>
        <begin position="1"/>
        <end position="447"/>
    </location>
</feature>
<feature type="binding site" evidence="1">
    <location>
        <position position="18"/>
    </location>
    <ligand>
        <name>ATP</name>
        <dbReference type="ChEBI" id="CHEBI:30616"/>
    </ligand>
</feature>
<feature type="binding site" evidence="1">
    <location>
        <begin position="60"/>
        <end position="65"/>
    </location>
    <ligand>
        <name>ATP</name>
        <dbReference type="ChEBI" id="CHEBI:30616"/>
    </ligand>
</feature>
<feature type="binding site" evidence="1">
    <location>
        <position position="259"/>
    </location>
    <ligand>
        <name>ATP</name>
        <dbReference type="ChEBI" id="CHEBI:30616"/>
    </ligand>
</feature>
<feature type="binding site" evidence="1">
    <location>
        <position position="325"/>
    </location>
    <ligand>
        <name>ATP</name>
        <dbReference type="ChEBI" id="CHEBI:30616"/>
    </ligand>
</feature>
<feature type="binding site" evidence="1">
    <location>
        <position position="397"/>
    </location>
    <ligand>
        <name>ATP</name>
        <dbReference type="ChEBI" id="CHEBI:30616"/>
    </ligand>
</feature>